<keyword id="KW-0002">3D-structure</keyword>
<keyword id="KW-0067">ATP-binding</keyword>
<keyword id="KW-0324">Glycolysis</keyword>
<keyword id="KW-0418">Kinase</keyword>
<keyword id="KW-0460">Magnesium</keyword>
<keyword id="KW-0479">Metal-binding</keyword>
<keyword id="KW-0547">Nucleotide-binding</keyword>
<keyword id="KW-0597">Phosphoprotein</keyword>
<keyword id="KW-0630">Potassium</keyword>
<keyword id="KW-0670">Pyruvate</keyword>
<keyword id="KW-1185">Reference proteome</keyword>
<keyword id="KW-0808">Transferase</keyword>
<protein>
    <recommendedName>
        <fullName>Pyruvate kinase</fullName>
        <shortName>PK</shortName>
        <ecNumber>2.7.1.40</ecNumber>
    </recommendedName>
</protein>
<evidence type="ECO:0000250" key="1"/>
<evidence type="ECO:0000250" key="2">
    <source>
        <dbReference type="UniProtKB" id="P14618"/>
    </source>
</evidence>
<evidence type="ECO:0000269" key="3">
    <source>
    </source>
</evidence>
<evidence type="ECO:0000305" key="4"/>
<evidence type="ECO:0007829" key="5">
    <source>
        <dbReference type="PDB" id="5WRP"/>
    </source>
</evidence>
<evidence type="ECO:0007829" key="6">
    <source>
        <dbReference type="PDB" id="5WS8"/>
    </source>
</evidence>
<evidence type="ECO:0007829" key="7">
    <source>
        <dbReference type="PDB" id="5WS9"/>
    </source>
</evidence>
<reference key="1">
    <citation type="journal article" date="1998" name="Nature">
        <title>Deciphering the biology of Mycobacterium tuberculosis from the complete genome sequence.</title>
        <authorList>
            <person name="Cole S.T."/>
            <person name="Brosch R."/>
            <person name="Parkhill J."/>
            <person name="Garnier T."/>
            <person name="Churcher C.M."/>
            <person name="Harris D.E."/>
            <person name="Gordon S.V."/>
            <person name="Eiglmeier K."/>
            <person name="Gas S."/>
            <person name="Barry C.E. III"/>
            <person name="Tekaia F."/>
            <person name="Badcock K."/>
            <person name="Basham D."/>
            <person name="Brown D."/>
            <person name="Chillingworth T."/>
            <person name="Connor R."/>
            <person name="Davies R.M."/>
            <person name="Devlin K."/>
            <person name="Feltwell T."/>
            <person name="Gentles S."/>
            <person name="Hamlin N."/>
            <person name="Holroyd S."/>
            <person name="Hornsby T."/>
            <person name="Jagels K."/>
            <person name="Krogh A."/>
            <person name="McLean J."/>
            <person name="Moule S."/>
            <person name="Murphy L.D."/>
            <person name="Oliver S."/>
            <person name="Osborne J."/>
            <person name="Quail M.A."/>
            <person name="Rajandream M.A."/>
            <person name="Rogers J."/>
            <person name="Rutter S."/>
            <person name="Seeger K."/>
            <person name="Skelton S."/>
            <person name="Squares S."/>
            <person name="Squares R."/>
            <person name="Sulston J.E."/>
            <person name="Taylor K."/>
            <person name="Whitehead S."/>
            <person name="Barrell B.G."/>
        </authorList>
    </citation>
    <scope>NUCLEOTIDE SEQUENCE [LARGE SCALE GENOMIC DNA]</scope>
    <source>
        <strain>ATCC 25618 / H37Rv</strain>
    </source>
</reference>
<reference key="2">
    <citation type="journal article" date="2010" name="PLoS ONE">
        <title>Understanding the role of PknJ in Mycobacterium tuberculosis: biochemical characterization and identification of novel substrate pyruvate kinase A.</title>
        <authorList>
            <person name="Arora G."/>
            <person name="Sajid A."/>
            <person name="Gupta M."/>
            <person name="Bhaduri A."/>
            <person name="Kumar P."/>
            <person name="Basu-Modak S."/>
            <person name="Singh Y."/>
        </authorList>
    </citation>
    <scope>CATALYTIC ACTIVITY</scope>
    <scope>PHOSPHORYLATION AT SER-37</scope>
    <scope>DEPHOSPHORYLATION</scope>
    <scope>MUTAGENESIS OF SER-37</scope>
    <source>
        <strain>ATCC 25618 / H37Rv</strain>
    </source>
</reference>
<reference key="3">
    <citation type="journal article" date="2011" name="Mol. Cell. Proteomics">
        <title>Proteogenomic analysis of Mycobacterium tuberculosis by high resolution mass spectrometry.</title>
        <authorList>
            <person name="Kelkar D.S."/>
            <person name="Kumar D."/>
            <person name="Kumar P."/>
            <person name="Balakrishnan L."/>
            <person name="Muthusamy B."/>
            <person name="Yadav A.K."/>
            <person name="Shrivastava P."/>
            <person name="Marimuthu A."/>
            <person name="Anand S."/>
            <person name="Sundaram H."/>
            <person name="Kingsbury R."/>
            <person name="Harsha H.C."/>
            <person name="Nair B."/>
            <person name="Prasad T.S."/>
            <person name="Chauhan D.S."/>
            <person name="Katoch K."/>
            <person name="Katoch V.M."/>
            <person name="Kumar P."/>
            <person name="Chaerkady R."/>
            <person name="Ramachandran S."/>
            <person name="Dash D."/>
            <person name="Pandey A."/>
        </authorList>
    </citation>
    <scope>IDENTIFICATION BY MASS SPECTROMETRY [LARGE SCALE ANALYSIS]</scope>
    <source>
        <strain>ATCC 25618 / H37Rv</strain>
    </source>
</reference>
<proteinExistence type="evidence at protein level"/>
<feature type="chain" id="PRO_0000112082" description="Pyruvate kinase">
    <location>
        <begin position="1"/>
        <end position="472"/>
    </location>
</feature>
<feature type="binding site" evidence="1">
    <location>
        <position position="33"/>
    </location>
    <ligand>
        <name>substrate</name>
    </ligand>
</feature>
<feature type="binding site" evidence="2">
    <location>
        <begin position="35"/>
        <end position="38"/>
    </location>
    <ligand>
        <name>ATP</name>
        <dbReference type="ChEBI" id="CHEBI:30616"/>
    </ligand>
</feature>
<feature type="binding site" evidence="1">
    <location>
        <position position="35"/>
    </location>
    <ligand>
        <name>K(+)</name>
        <dbReference type="ChEBI" id="CHEBI:29103"/>
    </ligand>
</feature>
<feature type="binding site" evidence="1">
    <location>
        <position position="37"/>
    </location>
    <ligand>
        <name>K(+)</name>
        <dbReference type="ChEBI" id="CHEBI:29103"/>
    </ligand>
</feature>
<feature type="binding site" evidence="1">
    <location>
        <position position="67"/>
    </location>
    <ligand>
        <name>K(+)</name>
        <dbReference type="ChEBI" id="CHEBI:29103"/>
    </ligand>
</feature>
<feature type="binding site" evidence="2">
    <location>
        <position position="74"/>
    </location>
    <ligand>
        <name>ATP</name>
        <dbReference type="ChEBI" id="CHEBI:30616"/>
    </ligand>
</feature>
<feature type="binding site" evidence="2">
    <location>
        <position position="155"/>
    </location>
    <ligand>
        <name>ATP</name>
        <dbReference type="ChEBI" id="CHEBI:30616"/>
    </ligand>
</feature>
<feature type="binding site" evidence="1">
    <location>
        <position position="220"/>
    </location>
    <ligand>
        <name>Mg(2+)</name>
        <dbReference type="ChEBI" id="CHEBI:18420"/>
    </ligand>
</feature>
<feature type="binding site" evidence="1">
    <location>
        <position position="243"/>
    </location>
    <ligand>
        <name>substrate</name>
    </ligand>
</feature>
<feature type="binding site" evidence="1">
    <location>
        <position position="244"/>
    </location>
    <ligand>
        <name>Mg(2+)</name>
        <dbReference type="ChEBI" id="CHEBI:18420"/>
    </ligand>
</feature>
<feature type="binding site" evidence="1">
    <location>
        <position position="244"/>
    </location>
    <ligand>
        <name>substrate</name>
    </ligand>
</feature>
<feature type="binding site" evidence="1">
    <location>
        <position position="276"/>
    </location>
    <ligand>
        <name>substrate</name>
    </ligand>
</feature>
<feature type="site" description="Transition state stabilizer" evidence="1">
    <location>
        <position position="218"/>
    </location>
</feature>
<feature type="modified residue" description="Phosphoserine; by PknJ; in vitro" evidence="3">
    <location>
        <position position="37"/>
    </location>
</feature>
<feature type="mutagenesis site" description="Partial loss of phosphorylation. Decrease in activity." evidence="3">
    <original>S</original>
    <variation>A</variation>
    <location>
        <position position="37"/>
    </location>
</feature>
<feature type="strand" evidence="7">
    <location>
        <begin position="5"/>
        <end position="10"/>
    </location>
</feature>
<feature type="helix" evidence="7">
    <location>
        <begin position="13"/>
        <end position="15"/>
    </location>
</feature>
<feature type="helix" evidence="7">
    <location>
        <begin position="20"/>
        <end position="27"/>
    </location>
</feature>
<feature type="strand" evidence="7">
    <location>
        <begin position="31"/>
        <end position="35"/>
    </location>
</feature>
<feature type="helix" evidence="7">
    <location>
        <begin position="41"/>
        <end position="58"/>
    </location>
</feature>
<feature type="strand" evidence="7">
    <location>
        <begin position="63"/>
        <end position="68"/>
    </location>
</feature>
<feature type="strand" evidence="7">
    <location>
        <begin position="81"/>
        <end position="85"/>
    </location>
</feature>
<feature type="strand" evidence="7">
    <location>
        <begin position="90"/>
        <end position="96"/>
    </location>
</feature>
<feature type="strand" evidence="7">
    <location>
        <begin position="102"/>
        <end position="108"/>
    </location>
</feature>
<feature type="helix" evidence="7">
    <location>
        <begin position="112"/>
        <end position="115"/>
    </location>
</feature>
<feature type="strand" evidence="7">
    <location>
        <begin position="121"/>
        <end position="124"/>
    </location>
</feature>
<feature type="turn" evidence="7">
    <location>
        <begin position="125"/>
        <end position="127"/>
    </location>
</feature>
<feature type="strand" evidence="7">
    <location>
        <begin position="128"/>
        <end position="137"/>
    </location>
</feature>
<feature type="strand" evidence="7">
    <location>
        <begin position="140"/>
        <end position="147"/>
    </location>
</feature>
<feature type="strand" evidence="7">
    <location>
        <begin position="149"/>
        <end position="152"/>
    </location>
</feature>
<feature type="strand" evidence="7">
    <location>
        <begin position="156"/>
        <end position="158"/>
    </location>
</feature>
<feature type="helix" evidence="7">
    <location>
        <begin position="171"/>
        <end position="183"/>
    </location>
</feature>
<feature type="strand" evidence="7">
    <location>
        <begin position="186"/>
        <end position="190"/>
    </location>
</feature>
<feature type="helix" evidence="7">
    <location>
        <begin position="198"/>
        <end position="209"/>
    </location>
</feature>
<feature type="strand" evidence="7">
    <location>
        <begin position="215"/>
        <end position="219"/>
    </location>
</feature>
<feature type="helix" evidence="7">
    <location>
        <begin position="222"/>
        <end position="226"/>
    </location>
</feature>
<feature type="helix" evidence="7">
    <location>
        <begin position="228"/>
        <end position="234"/>
    </location>
</feature>
<feature type="strand" evidence="7">
    <location>
        <begin position="235"/>
        <end position="241"/>
    </location>
</feature>
<feature type="helix" evidence="7">
    <location>
        <begin position="242"/>
        <end position="248"/>
    </location>
</feature>
<feature type="helix" evidence="7">
    <location>
        <begin position="251"/>
        <end position="253"/>
    </location>
</feature>
<feature type="helix" evidence="7">
    <location>
        <begin position="254"/>
        <end position="267"/>
    </location>
</feature>
<feature type="strand" evidence="7">
    <location>
        <begin position="272"/>
        <end position="277"/>
    </location>
</feature>
<feature type="helix" evidence="7">
    <location>
        <begin position="280"/>
        <end position="283"/>
    </location>
</feature>
<feature type="helix" evidence="7">
    <location>
        <begin position="290"/>
        <end position="302"/>
    </location>
</feature>
<feature type="strand" evidence="7">
    <location>
        <begin position="305"/>
        <end position="310"/>
    </location>
</feature>
<feature type="helix" evidence="7">
    <location>
        <begin position="311"/>
        <end position="314"/>
    </location>
</feature>
<feature type="helix" evidence="7">
    <location>
        <begin position="319"/>
        <end position="336"/>
    </location>
</feature>
<feature type="helix" evidence="7">
    <location>
        <begin position="350"/>
        <end position="364"/>
    </location>
</feature>
<feature type="strand" evidence="7">
    <location>
        <begin position="368"/>
        <end position="373"/>
    </location>
</feature>
<feature type="strand" evidence="7">
    <location>
        <begin position="375"/>
        <end position="377"/>
    </location>
</feature>
<feature type="helix" evidence="7">
    <location>
        <begin position="378"/>
        <end position="384"/>
    </location>
</feature>
<feature type="turn" evidence="6">
    <location>
        <begin position="385"/>
        <end position="387"/>
    </location>
</feature>
<feature type="strand" evidence="7">
    <location>
        <begin position="392"/>
        <end position="397"/>
    </location>
</feature>
<feature type="helix" evidence="7">
    <location>
        <begin position="399"/>
        <end position="404"/>
    </location>
</feature>
<feature type="helix" evidence="7">
    <location>
        <begin position="405"/>
        <end position="407"/>
    </location>
</feature>
<feature type="strand" evidence="7">
    <location>
        <begin position="411"/>
        <end position="415"/>
    </location>
</feature>
<feature type="helix" evidence="7">
    <location>
        <begin position="422"/>
        <end position="434"/>
    </location>
</feature>
<feature type="strand" evidence="7">
    <location>
        <begin position="444"/>
        <end position="452"/>
    </location>
</feature>
<feature type="strand" evidence="7">
    <location>
        <begin position="459"/>
        <end position="466"/>
    </location>
</feature>
<feature type="turn" evidence="5">
    <location>
        <begin position="467"/>
        <end position="470"/>
    </location>
</feature>
<accession>P9WKE5</accession>
<accession>L0T783</accession>
<accession>O06134</accession>
<name>KPYK_MYCTU</name>
<dbReference type="EC" id="2.7.1.40"/>
<dbReference type="EMBL" id="AL123456">
    <property type="protein sequence ID" value="CCP44381.1"/>
    <property type="molecule type" value="Genomic_DNA"/>
</dbReference>
<dbReference type="PIR" id="G70557">
    <property type="entry name" value="G70557"/>
</dbReference>
<dbReference type="RefSeq" id="NP_216133.1">
    <property type="nucleotide sequence ID" value="NC_000962.3"/>
</dbReference>
<dbReference type="RefSeq" id="WP_003898945.1">
    <property type="nucleotide sequence ID" value="NZ_NVQJ01000016.1"/>
</dbReference>
<dbReference type="PDB" id="5WRP">
    <property type="method" value="X-ray"/>
    <property type="resolution" value="2.85 A"/>
    <property type="chains" value="A/B/C/D=1-472"/>
</dbReference>
<dbReference type="PDB" id="5WS8">
    <property type="method" value="X-ray"/>
    <property type="resolution" value="2.62 A"/>
    <property type="chains" value="A/B/C/D=1-472"/>
</dbReference>
<dbReference type="PDB" id="5WS9">
    <property type="method" value="X-ray"/>
    <property type="resolution" value="1.90 A"/>
    <property type="chains" value="A/B/C/D=1-472"/>
</dbReference>
<dbReference type="PDB" id="5WSA">
    <property type="method" value="X-ray"/>
    <property type="resolution" value="2.85 A"/>
    <property type="chains" value="A/B/C/D=1-472"/>
</dbReference>
<dbReference type="PDB" id="5WSB">
    <property type="method" value="X-ray"/>
    <property type="resolution" value="2.25 A"/>
    <property type="chains" value="A/B/C/D=1-472"/>
</dbReference>
<dbReference type="PDB" id="5WSC">
    <property type="method" value="X-ray"/>
    <property type="resolution" value="2.40 A"/>
    <property type="chains" value="A/B/C/D=1-472"/>
</dbReference>
<dbReference type="PDB" id="6ITO">
    <property type="method" value="X-ray"/>
    <property type="resolution" value="2.55 A"/>
    <property type="chains" value="A/B/C/D=1-472"/>
</dbReference>
<dbReference type="PDBsum" id="5WRP"/>
<dbReference type="PDBsum" id="5WS8"/>
<dbReference type="PDBsum" id="5WS9"/>
<dbReference type="PDBsum" id="5WSA"/>
<dbReference type="PDBsum" id="5WSB"/>
<dbReference type="PDBsum" id="5WSC"/>
<dbReference type="PDBsum" id="6ITO"/>
<dbReference type="SMR" id="P9WKE5"/>
<dbReference type="FunCoup" id="P9WKE5">
    <property type="interactions" value="402"/>
</dbReference>
<dbReference type="STRING" id="83332.Rv1617"/>
<dbReference type="iPTMnet" id="P9WKE5"/>
<dbReference type="PaxDb" id="83332-Rv1617"/>
<dbReference type="GeneID" id="45425585"/>
<dbReference type="GeneID" id="885501"/>
<dbReference type="KEGG" id="mtu:Rv1617"/>
<dbReference type="KEGG" id="mtv:RVBD_1617"/>
<dbReference type="TubercuList" id="Rv1617"/>
<dbReference type="eggNOG" id="COG0469">
    <property type="taxonomic scope" value="Bacteria"/>
</dbReference>
<dbReference type="InParanoid" id="P9WKE5"/>
<dbReference type="OrthoDB" id="9812123at2"/>
<dbReference type="PhylomeDB" id="P9WKE5"/>
<dbReference type="BRENDA" id="2.7.1.40">
    <property type="organism ID" value="3445"/>
</dbReference>
<dbReference type="UniPathway" id="UPA00109">
    <property type="reaction ID" value="UER00188"/>
</dbReference>
<dbReference type="Proteomes" id="UP000001584">
    <property type="component" value="Chromosome"/>
</dbReference>
<dbReference type="GO" id="GO:0005737">
    <property type="term" value="C:cytoplasm"/>
    <property type="evidence" value="ECO:0000318"/>
    <property type="project" value="GO_Central"/>
</dbReference>
<dbReference type="GO" id="GO:0005829">
    <property type="term" value="C:cytosol"/>
    <property type="evidence" value="ECO:0007005"/>
    <property type="project" value="MTBBASE"/>
</dbReference>
<dbReference type="GO" id="GO:0005886">
    <property type="term" value="C:plasma membrane"/>
    <property type="evidence" value="ECO:0007005"/>
    <property type="project" value="MTBBASE"/>
</dbReference>
<dbReference type="GO" id="GO:0005524">
    <property type="term" value="F:ATP binding"/>
    <property type="evidence" value="ECO:0007669"/>
    <property type="project" value="UniProtKB-KW"/>
</dbReference>
<dbReference type="GO" id="GO:0016301">
    <property type="term" value="F:kinase activity"/>
    <property type="evidence" value="ECO:0007669"/>
    <property type="project" value="UniProtKB-KW"/>
</dbReference>
<dbReference type="GO" id="GO:0000287">
    <property type="term" value="F:magnesium ion binding"/>
    <property type="evidence" value="ECO:0007669"/>
    <property type="project" value="InterPro"/>
</dbReference>
<dbReference type="GO" id="GO:0030955">
    <property type="term" value="F:potassium ion binding"/>
    <property type="evidence" value="ECO:0007669"/>
    <property type="project" value="InterPro"/>
</dbReference>
<dbReference type="GO" id="GO:0004743">
    <property type="term" value="F:pyruvate kinase activity"/>
    <property type="evidence" value="ECO:0000318"/>
    <property type="project" value="GO_Central"/>
</dbReference>
<dbReference type="GO" id="GO:0006096">
    <property type="term" value="P:glycolytic process"/>
    <property type="evidence" value="ECO:0000318"/>
    <property type="project" value="GO_Central"/>
</dbReference>
<dbReference type="FunFam" id="2.40.33.10:FF:000001">
    <property type="entry name" value="Pyruvate kinase"/>
    <property type="match status" value="1"/>
</dbReference>
<dbReference type="FunFam" id="3.40.1380.20:FF:000009">
    <property type="entry name" value="Pyruvate kinase"/>
    <property type="match status" value="1"/>
</dbReference>
<dbReference type="Gene3D" id="3.20.20.60">
    <property type="entry name" value="Phosphoenolpyruvate-binding domains"/>
    <property type="match status" value="1"/>
</dbReference>
<dbReference type="Gene3D" id="2.40.33.10">
    <property type="entry name" value="PK beta-barrel domain-like"/>
    <property type="match status" value="1"/>
</dbReference>
<dbReference type="Gene3D" id="3.40.1380.20">
    <property type="entry name" value="Pyruvate kinase, C-terminal domain"/>
    <property type="match status" value="1"/>
</dbReference>
<dbReference type="InterPro" id="IPR001697">
    <property type="entry name" value="Pyr_Knase"/>
</dbReference>
<dbReference type="InterPro" id="IPR015813">
    <property type="entry name" value="Pyrv/PenolPyrv_kinase-like_dom"/>
</dbReference>
<dbReference type="InterPro" id="IPR040442">
    <property type="entry name" value="Pyrv_kinase-like_dom_sf"/>
</dbReference>
<dbReference type="InterPro" id="IPR011037">
    <property type="entry name" value="Pyrv_Knase-like_insert_dom_sf"/>
</dbReference>
<dbReference type="InterPro" id="IPR018209">
    <property type="entry name" value="Pyrv_Knase_AS"/>
</dbReference>
<dbReference type="InterPro" id="IPR015793">
    <property type="entry name" value="Pyrv_Knase_brl"/>
</dbReference>
<dbReference type="InterPro" id="IPR015795">
    <property type="entry name" value="Pyrv_Knase_C"/>
</dbReference>
<dbReference type="InterPro" id="IPR036918">
    <property type="entry name" value="Pyrv_Knase_C_sf"/>
</dbReference>
<dbReference type="InterPro" id="IPR015806">
    <property type="entry name" value="Pyrv_Knase_insert_dom_sf"/>
</dbReference>
<dbReference type="NCBIfam" id="NF004491">
    <property type="entry name" value="PRK05826.1"/>
    <property type="match status" value="1"/>
</dbReference>
<dbReference type="NCBIfam" id="NF004886">
    <property type="entry name" value="PRK06247.1"/>
    <property type="match status" value="1"/>
</dbReference>
<dbReference type="NCBIfam" id="NF004978">
    <property type="entry name" value="PRK06354.1"/>
    <property type="match status" value="1"/>
</dbReference>
<dbReference type="NCBIfam" id="TIGR01064">
    <property type="entry name" value="pyruv_kin"/>
    <property type="match status" value="1"/>
</dbReference>
<dbReference type="PANTHER" id="PTHR11817">
    <property type="entry name" value="PYRUVATE KINASE"/>
    <property type="match status" value="1"/>
</dbReference>
<dbReference type="Pfam" id="PF00224">
    <property type="entry name" value="PK"/>
    <property type="match status" value="1"/>
</dbReference>
<dbReference type="Pfam" id="PF02887">
    <property type="entry name" value="PK_C"/>
    <property type="match status" value="1"/>
</dbReference>
<dbReference type="PRINTS" id="PR01050">
    <property type="entry name" value="PYRUVTKNASE"/>
</dbReference>
<dbReference type="SUPFAM" id="SSF51621">
    <property type="entry name" value="Phosphoenolpyruvate/pyruvate domain"/>
    <property type="match status" value="1"/>
</dbReference>
<dbReference type="SUPFAM" id="SSF50800">
    <property type="entry name" value="PK beta-barrel domain-like"/>
    <property type="match status" value="1"/>
</dbReference>
<dbReference type="SUPFAM" id="SSF52935">
    <property type="entry name" value="PK C-terminal domain-like"/>
    <property type="match status" value="1"/>
</dbReference>
<dbReference type="PROSITE" id="PS00110">
    <property type="entry name" value="PYRUVATE_KINASE"/>
    <property type="match status" value="1"/>
</dbReference>
<comment type="catalytic activity">
    <reaction evidence="3">
        <text>pyruvate + ATP = phosphoenolpyruvate + ADP + H(+)</text>
        <dbReference type="Rhea" id="RHEA:18157"/>
        <dbReference type="ChEBI" id="CHEBI:15361"/>
        <dbReference type="ChEBI" id="CHEBI:15378"/>
        <dbReference type="ChEBI" id="CHEBI:30616"/>
        <dbReference type="ChEBI" id="CHEBI:58702"/>
        <dbReference type="ChEBI" id="CHEBI:456216"/>
        <dbReference type="EC" id="2.7.1.40"/>
    </reaction>
</comment>
<comment type="cofactor">
    <cofactor>
        <name>Mg(2+)</name>
        <dbReference type="ChEBI" id="CHEBI:18420"/>
    </cofactor>
</comment>
<comment type="cofactor">
    <cofactor>
        <name>K(+)</name>
        <dbReference type="ChEBI" id="CHEBI:29103"/>
    </cofactor>
</comment>
<comment type="pathway">
    <text>Carbohydrate degradation; glycolysis; pyruvate from D-glyceraldehyde 3-phosphate: step 5/5.</text>
</comment>
<comment type="subunit">
    <text evidence="1">Homotetramer.</text>
</comment>
<comment type="PTM">
    <text evidence="3">Phosphorylated by PknJ. Dephosphorylated by PstP.</text>
</comment>
<comment type="similarity">
    <text evidence="4">Belongs to the pyruvate kinase family.</text>
</comment>
<gene>
    <name type="primary">pyk</name>
    <name type="synonym">pykA</name>
    <name type="ordered locus">Rv1617</name>
    <name type="ORF">MTCY01B2.09</name>
</gene>
<organism>
    <name type="scientific">Mycobacterium tuberculosis (strain ATCC 25618 / H37Rv)</name>
    <dbReference type="NCBI Taxonomy" id="83332"/>
    <lineage>
        <taxon>Bacteria</taxon>
        <taxon>Bacillati</taxon>
        <taxon>Actinomycetota</taxon>
        <taxon>Actinomycetes</taxon>
        <taxon>Mycobacteriales</taxon>
        <taxon>Mycobacteriaceae</taxon>
        <taxon>Mycobacterium</taxon>
        <taxon>Mycobacterium tuberculosis complex</taxon>
    </lineage>
</organism>
<sequence length="472" mass="50699">MTRRGKIVCTLGPATQRDDLVRALVEAGMDVARMNFSHGDYDDHKVAYERVRVASDATGRAVGVLADLQGPKIRLGRFASGATHWAEGETVRITVGACEGSHDRVSTTYKRLAQDAVAGDRVLVDDGKVALVVDAVEGDDVVCTVVEGGPVSDNKGISLPGMNVTAPALSEKDIEDLTFALNLGVDMVALSFVRSPADVELVHEVMDRIGRRVPVIAKLEKPEAIDNLEAIVLAFDAVMVARGDLGVELPLEEVPLVQKRAIQMARENAKPVIVATQMLDSMIENSRPTRAEASDVANAVLDGADALMLSGETSVGKYPLAAVRTMSRIICAVEENSTAAPPLTHIPRTKRGVISYAARDIGERLDAKALVAFTQSGDTVRRLARLHTPLPLLAFTAWPEVRSQLAMTWGTETFIVPKMQSTDGMIRQVDKSLLELARYKRGDLVVIVAGAPPGTVGSTNLIHVHRIGEDDV</sequence>